<name>S35B4_PONAB</name>
<protein>
    <recommendedName>
        <fullName>Nucleotide sugar transporter SLC35B4</fullName>
    </recommendedName>
    <alternativeName>
        <fullName>Solute carrier family 35 member B4</fullName>
    </alternativeName>
    <alternativeName>
        <fullName>UDP-xylose and UDP-N-acetylglucosamine transporter</fullName>
    </alternativeName>
</protein>
<feature type="chain" id="PRO_0000213388" description="Nucleotide sugar transporter SLC35B4">
    <location>
        <begin position="1"/>
        <end position="331"/>
    </location>
</feature>
<feature type="transmembrane region" description="Helical" evidence="2">
    <location>
        <begin position="4"/>
        <end position="24"/>
    </location>
</feature>
<feature type="transmembrane region" description="Helical" evidence="2">
    <location>
        <begin position="30"/>
        <end position="50"/>
    </location>
</feature>
<feature type="transmembrane region" description="Helical" evidence="2">
    <location>
        <begin position="59"/>
        <end position="79"/>
    </location>
</feature>
<feature type="transmembrane region" description="Helical" evidence="2">
    <location>
        <begin position="92"/>
        <end position="112"/>
    </location>
</feature>
<feature type="transmembrane region" description="Helical" evidence="2">
    <location>
        <begin position="117"/>
        <end position="137"/>
    </location>
</feature>
<feature type="transmembrane region" description="Helical" evidence="2">
    <location>
        <begin position="153"/>
        <end position="173"/>
    </location>
</feature>
<feature type="transmembrane region" description="Helical" evidence="2">
    <location>
        <begin position="201"/>
        <end position="221"/>
    </location>
</feature>
<feature type="transmembrane region" description="Helical" evidence="2">
    <location>
        <begin position="229"/>
        <end position="249"/>
    </location>
</feature>
<feature type="transmembrane region" description="Helical" evidence="2">
    <location>
        <begin position="251"/>
        <end position="267"/>
    </location>
</feature>
<feature type="transmembrane region" description="Helical" evidence="2">
    <location>
        <begin position="268"/>
        <end position="288"/>
    </location>
</feature>
<feature type="transmembrane region" description="Helical" evidence="2">
    <location>
        <begin position="291"/>
        <end position="311"/>
    </location>
</feature>
<feature type="short sequence motif" description="Mediates endoplasmic reticulum retention" evidence="1">
    <location>
        <begin position="326"/>
        <end position="331"/>
    </location>
</feature>
<sequence length="331" mass="37424">MRPALAVGLVFAGCCSNVIFLELLARKHPGCGNIVTFAQFLFIAVEGFLFEADLGRKPPAIPIRYYAIMVTMFFTVSVVNNYALNLNIAMPLHMIFRSGSLIANMILGIIILKKRYSIFKYTSIALVSVGIFICTFMSAKQVTSQSSLSENDGFQAFVWWLLGIGALTFALLMSARMGLFQETLYKRFGKHSKEALFYNHALPLPGFVFLASDIYDHAVLFNKSELYEIPVIGVTLPIMWFYLLMNIITQYVCIRGVFILTTECASLTVTLVVTLRKFVSLIFSILYFQNPFTLWHWLGTLFVFIGTLMYTEVWNNLGTTKSEPQKDSKKN</sequence>
<keyword id="KW-0256">Endoplasmic reticulum</keyword>
<keyword id="KW-0472">Membrane</keyword>
<keyword id="KW-1185">Reference proteome</keyword>
<keyword id="KW-0762">Sugar transport</keyword>
<keyword id="KW-0812">Transmembrane</keyword>
<keyword id="KW-1133">Transmembrane helix</keyword>
<keyword id="KW-0813">Transport</keyword>
<accession>Q5R8M3</accession>
<proteinExistence type="evidence at transcript level"/>
<organism>
    <name type="scientific">Pongo abelii</name>
    <name type="common">Sumatran orangutan</name>
    <name type="synonym">Pongo pygmaeus abelii</name>
    <dbReference type="NCBI Taxonomy" id="9601"/>
    <lineage>
        <taxon>Eukaryota</taxon>
        <taxon>Metazoa</taxon>
        <taxon>Chordata</taxon>
        <taxon>Craniata</taxon>
        <taxon>Vertebrata</taxon>
        <taxon>Euteleostomi</taxon>
        <taxon>Mammalia</taxon>
        <taxon>Eutheria</taxon>
        <taxon>Euarchontoglires</taxon>
        <taxon>Primates</taxon>
        <taxon>Haplorrhini</taxon>
        <taxon>Catarrhini</taxon>
        <taxon>Hominidae</taxon>
        <taxon>Pongo</taxon>
    </lineage>
</organism>
<comment type="function">
    <text evidence="1">Antiporter that transports nucleotide sugars across the endoplasmic reticulum (ER) membrane in exchange for another nucleotide sugar. May couple UDP-alpha-D-glucuronate (UDP-GlcA) or UDP-alpha-D-xylose (UDP-Xyl) efflux to UDP-alpha-D-glucuronate (UDP-GlcA) influx into the ER lumen, which in turn stimulates glucuronidation and excretion of endobiotics and xenobiotics.</text>
</comment>
<comment type="catalytic activity">
    <reaction evidence="1">
        <text>UDP-N-acetyl-alpha-D-glucosamine(in) + UDP-alpha-D-glucuronate(out) = UDP-N-acetyl-alpha-D-glucosamine(out) + UDP-alpha-D-glucuronate(in)</text>
        <dbReference type="Rhea" id="RHEA:73703"/>
        <dbReference type="ChEBI" id="CHEBI:57705"/>
        <dbReference type="ChEBI" id="CHEBI:58052"/>
    </reaction>
    <physiologicalReaction direction="left-to-right" evidence="1">
        <dbReference type="Rhea" id="RHEA:73704"/>
    </physiologicalReaction>
</comment>
<comment type="catalytic activity">
    <reaction evidence="1">
        <text>UDP-alpha-D-xylose(in) + UDP-alpha-D-glucuronate(out) = UDP-alpha-D-xylose(out) + UDP-alpha-D-glucuronate(in)</text>
        <dbReference type="Rhea" id="RHEA:74831"/>
        <dbReference type="ChEBI" id="CHEBI:57632"/>
        <dbReference type="ChEBI" id="CHEBI:58052"/>
    </reaction>
    <physiologicalReaction direction="left-to-right" evidence="1">
        <dbReference type="Rhea" id="RHEA:74832"/>
    </physiologicalReaction>
</comment>
<comment type="subcellular location">
    <subcellularLocation>
        <location evidence="1">Endoplasmic reticulum membrane</location>
        <topology evidence="2">Multi-pass membrane protein</topology>
    </subcellularLocation>
</comment>
<comment type="similarity">
    <text evidence="3">Belongs to the nucleotide-sugar transporter family. SLC35B subfamily.</text>
</comment>
<evidence type="ECO:0000250" key="1">
    <source>
        <dbReference type="UniProtKB" id="Q969S0"/>
    </source>
</evidence>
<evidence type="ECO:0000255" key="2"/>
<evidence type="ECO:0000305" key="3"/>
<gene>
    <name type="primary">SLC35B4</name>
</gene>
<dbReference type="EMBL" id="CR859728">
    <property type="protein sequence ID" value="CAH91887.1"/>
    <property type="molecule type" value="mRNA"/>
</dbReference>
<dbReference type="RefSeq" id="NP_001126093.1">
    <property type="nucleotide sequence ID" value="NM_001132621.1"/>
</dbReference>
<dbReference type="FunCoup" id="Q5R8M3">
    <property type="interactions" value="1873"/>
</dbReference>
<dbReference type="STRING" id="9601.ENSPPYP00000020214"/>
<dbReference type="Ensembl" id="ENSPPYT00000021007.3">
    <property type="protein sequence ID" value="ENSPPYP00000020214.2"/>
    <property type="gene ID" value="ENSPPYG00000018016.3"/>
</dbReference>
<dbReference type="GeneID" id="100173046"/>
<dbReference type="KEGG" id="pon:100173046"/>
<dbReference type="CTD" id="84912"/>
<dbReference type="eggNOG" id="KOG1583">
    <property type="taxonomic scope" value="Eukaryota"/>
</dbReference>
<dbReference type="GeneTree" id="ENSGT00390000002915"/>
<dbReference type="HOGENOM" id="CLU_033007_1_0_1"/>
<dbReference type="InParanoid" id="Q5R8M3"/>
<dbReference type="OMA" id="NPFTGWH"/>
<dbReference type="OrthoDB" id="999962at2759"/>
<dbReference type="TreeFam" id="TF312926"/>
<dbReference type="Proteomes" id="UP000001595">
    <property type="component" value="Chromosome 7"/>
</dbReference>
<dbReference type="GO" id="GO:0005789">
    <property type="term" value="C:endoplasmic reticulum membrane"/>
    <property type="evidence" value="ECO:0007669"/>
    <property type="project" value="UniProtKB-SubCell"/>
</dbReference>
<dbReference type="GO" id="GO:0000139">
    <property type="term" value="C:Golgi membrane"/>
    <property type="evidence" value="ECO:0007669"/>
    <property type="project" value="TreeGrafter"/>
</dbReference>
<dbReference type="GO" id="GO:0005462">
    <property type="term" value="F:UDP-N-acetylglucosamine transmembrane transporter activity"/>
    <property type="evidence" value="ECO:0007669"/>
    <property type="project" value="Ensembl"/>
</dbReference>
<dbReference type="GO" id="GO:0005464">
    <property type="term" value="F:UDP-xylose transmembrane transporter activity"/>
    <property type="evidence" value="ECO:0007669"/>
    <property type="project" value="Ensembl"/>
</dbReference>
<dbReference type="GO" id="GO:0006111">
    <property type="term" value="P:regulation of gluconeogenesis"/>
    <property type="evidence" value="ECO:0007669"/>
    <property type="project" value="Ensembl"/>
</dbReference>
<dbReference type="InterPro" id="IPR013657">
    <property type="entry name" value="SCL35B1-4/HUT1"/>
</dbReference>
<dbReference type="PANTHER" id="PTHR10778:SF4">
    <property type="entry name" value="NUCLEOTIDE SUGAR TRANSPORTER SLC35B4"/>
    <property type="match status" value="1"/>
</dbReference>
<dbReference type="PANTHER" id="PTHR10778">
    <property type="entry name" value="SOLUTE CARRIER FAMILY 35 MEMBER B"/>
    <property type="match status" value="1"/>
</dbReference>
<dbReference type="Pfam" id="PF08449">
    <property type="entry name" value="UAA"/>
    <property type="match status" value="1"/>
</dbReference>
<reference key="1">
    <citation type="submission" date="2004-11" db="EMBL/GenBank/DDBJ databases">
        <authorList>
            <consortium name="The German cDNA consortium"/>
        </authorList>
    </citation>
    <scope>NUCLEOTIDE SEQUENCE [LARGE SCALE MRNA]</scope>
    <source>
        <tissue>Heart</tissue>
    </source>
</reference>